<accession>Q8NGG3</accession>
<accession>Q6IFC7</accession>
<reference key="1">
    <citation type="submission" date="2001-07" db="EMBL/GenBank/DDBJ databases">
        <title>Genome-wide discovery and analysis of human seven transmembrane helix receptor genes.</title>
        <authorList>
            <person name="Suwa M."/>
            <person name="Sato T."/>
            <person name="Okouchi I."/>
            <person name="Arita M."/>
            <person name="Futami K."/>
            <person name="Matsumoto S."/>
            <person name="Tsutsumi S."/>
            <person name="Aburatani H."/>
            <person name="Asai K."/>
            <person name="Akiyama Y."/>
        </authorList>
    </citation>
    <scope>NUCLEOTIDE SEQUENCE [GENOMIC DNA]</scope>
</reference>
<reference key="2">
    <citation type="journal article" date="2006" name="Nature">
        <title>Human chromosome 11 DNA sequence and analysis including novel gene identification.</title>
        <authorList>
            <person name="Taylor T.D."/>
            <person name="Noguchi H."/>
            <person name="Totoki Y."/>
            <person name="Toyoda A."/>
            <person name="Kuroki Y."/>
            <person name="Dewar K."/>
            <person name="Lloyd C."/>
            <person name="Itoh T."/>
            <person name="Takeda T."/>
            <person name="Kim D.-W."/>
            <person name="She X."/>
            <person name="Barlow K.F."/>
            <person name="Bloom T."/>
            <person name="Bruford E."/>
            <person name="Chang J.L."/>
            <person name="Cuomo C.A."/>
            <person name="Eichler E."/>
            <person name="FitzGerald M.G."/>
            <person name="Jaffe D.B."/>
            <person name="LaButti K."/>
            <person name="Nicol R."/>
            <person name="Park H.-S."/>
            <person name="Seaman C."/>
            <person name="Sougnez C."/>
            <person name="Yang X."/>
            <person name="Zimmer A.R."/>
            <person name="Zody M.C."/>
            <person name="Birren B.W."/>
            <person name="Nusbaum C."/>
            <person name="Fujiyama A."/>
            <person name="Hattori M."/>
            <person name="Rogers J."/>
            <person name="Lander E.S."/>
            <person name="Sakaki Y."/>
        </authorList>
    </citation>
    <scope>NUCLEOTIDE SEQUENCE [LARGE SCALE GENOMIC DNA]</scope>
</reference>
<reference key="3">
    <citation type="submission" date="2005-07" db="EMBL/GenBank/DDBJ databases">
        <authorList>
            <person name="Mural R.J."/>
            <person name="Istrail S."/>
            <person name="Sutton G.G."/>
            <person name="Florea L."/>
            <person name="Halpern A.L."/>
            <person name="Mobarry C.M."/>
            <person name="Lippert R."/>
            <person name="Walenz B."/>
            <person name="Shatkay H."/>
            <person name="Dew I."/>
            <person name="Miller J.R."/>
            <person name="Flanigan M.J."/>
            <person name="Edwards N.J."/>
            <person name="Bolanos R."/>
            <person name="Fasulo D."/>
            <person name="Halldorsson B.V."/>
            <person name="Hannenhalli S."/>
            <person name="Turner R."/>
            <person name="Yooseph S."/>
            <person name="Lu F."/>
            <person name="Nusskern D.R."/>
            <person name="Shue B.C."/>
            <person name="Zheng X.H."/>
            <person name="Zhong F."/>
            <person name="Delcher A.L."/>
            <person name="Huson D.H."/>
            <person name="Kravitz S.A."/>
            <person name="Mouchard L."/>
            <person name="Reinert K."/>
            <person name="Remington K.A."/>
            <person name="Clark A.G."/>
            <person name="Waterman M.S."/>
            <person name="Eichler E.E."/>
            <person name="Adams M.D."/>
            <person name="Hunkapiller M.W."/>
            <person name="Myers E.W."/>
            <person name="Venter J.C."/>
        </authorList>
    </citation>
    <scope>NUCLEOTIDE SEQUENCE [LARGE SCALE GENOMIC DNA]</scope>
</reference>
<reference key="4">
    <citation type="journal article" date="2004" name="Proc. Natl. Acad. Sci. U.S.A.">
        <title>The human olfactory receptor gene family.</title>
        <authorList>
            <person name="Malnic B."/>
            <person name="Godfrey P.A."/>
            <person name="Buck L.B."/>
        </authorList>
    </citation>
    <scope>IDENTIFICATION</scope>
</reference>
<reference key="5">
    <citation type="journal article" date="2004" name="Proc. Natl. Acad. Sci. U.S.A.">
        <authorList>
            <person name="Malnic B."/>
            <person name="Godfrey P.A."/>
            <person name="Buck L.B."/>
        </authorList>
    </citation>
    <scope>ERRATUM OF PUBMED:14983052</scope>
</reference>
<proteinExistence type="inferred from homology"/>
<keyword id="KW-1003">Cell membrane</keyword>
<keyword id="KW-1015">Disulfide bond</keyword>
<keyword id="KW-0297">G-protein coupled receptor</keyword>
<keyword id="KW-0325">Glycoprotein</keyword>
<keyword id="KW-0472">Membrane</keyword>
<keyword id="KW-0552">Olfaction</keyword>
<keyword id="KW-0675">Receptor</keyword>
<keyword id="KW-1185">Reference proteome</keyword>
<keyword id="KW-0716">Sensory transduction</keyword>
<keyword id="KW-0807">Transducer</keyword>
<keyword id="KW-0812">Transmembrane</keyword>
<keyword id="KW-1133">Transmembrane helix</keyword>
<evidence type="ECO:0000255" key="1"/>
<evidence type="ECO:0000255" key="2">
    <source>
        <dbReference type="PROSITE-ProRule" id="PRU00521"/>
    </source>
</evidence>
<evidence type="ECO:0000305" key="3"/>
<protein>
    <recommendedName>
        <fullName>Olfactory receptor 5T3</fullName>
    </recommendedName>
    <alternativeName>
        <fullName>Olfactory receptor OR11-178</fullName>
    </alternativeName>
</protein>
<sequence length="340" mass="38346">MDSTFTGYNLYNLQVKTEMDKLSSGLDIYRNPLKNKTEVTMFILTGFTDDFELQVFLFLLFFAIYLFTLIGNLGLVVLVIEDSWLHNPMYYFLSVLSFLDACYSTVVTPKMLVNFLAKNKSISFIGCATQMLLFVTFGTTECFLLAAMAYDHYVAIYNPLLYSVSMSPRVYVPLITASYVAGILHATIHIVATFSLSFCGSNEIRHVFCDMPPLLAISCSDTHTNQLLLFYFVGSIEIVTILIVLISCDFILLSILKMHSAKGRQKAFSTCGSHLTGVTIYHGTILVSYMRPSSSYASDHDIIVSIFYTIVIPKLNPIIYSLRNKEVKKAVKKMLKLVYK</sequence>
<comment type="function">
    <text evidence="3">Odorant receptor.</text>
</comment>
<comment type="subcellular location">
    <subcellularLocation>
        <location>Cell membrane</location>
        <topology>Multi-pass membrane protein</topology>
    </subcellularLocation>
</comment>
<comment type="similarity">
    <text evidence="2">Belongs to the G-protein coupled receptor 1 family.</text>
</comment>
<comment type="caution">
    <text evidence="3">It is uncertain whether Met-1 or Met-19 is the initiator.</text>
</comment>
<comment type="online information" name="Human Olfactory Receptor Data Exploratorium (HORDE)">
    <link uri="http://genome.weizmann.ac.il/horde/card/index/symbol:OR5T3"/>
</comment>
<gene>
    <name type="primary">OR5T3</name>
</gene>
<feature type="chain" id="PRO_0000150615" description="Olfactory receptor 5T3">
    <location>
        <begin position="1"/>
        <end position="340"/>
    </location>
</feature>
<feature type="topological domain" description="Extracellular" evidence="1">
    <location>
        <begin position="1"/>
        <end position="55"/>
    </location>
</feature>
<feature type="transmembrane region" description="Helical; Name=1" evidence="1">
    <location>
        <begin position="56"/>
        <end position="76"/>
    </location>
</feature>
<feature type="topological domain" description="Cytoplasmic" evidence="1">
    <location>
        <begin position="77"/>
        <end position="84"/>
    </location>
</feature>
<feature type="transmembrane region" description="Helical; Name=2" evidence="1">
    <location>
        <begin position="85"/>
        <end position="105"/>
    </location>
</feature>
<feature type="topological domain" description="Extracellular" evidence="1">
    <location>
        <begin position="106"/>
        <end position="129"/>
    </location>
</feature>
<feature type="transmembrane region" description="Helical; Name=3" evidence="1">
    <location>
        <begin position="130"/>
        <end position="150"/>
    </location>
</feature>
<feature type="topological domain" description="Cytoplasmic" evidence="1">
    <location>
        <begin position="151"/>
        <end position="169"/>
    </location>
</feature>
<feature type="transmembrane region" description="Helical; Name=4" evidence="1">
    <location>
        <begin position="170"/>
        <end position="190"/>
    </location>
</feature>
<feature type="topological domain" description="Extracellular" evidence="1">
    <location>
        <begin position="191"/>
        <end position="226"/>
    </location>
</feature>
<feature type="transmembrane region" description="Helical; Name=5" evidence="1">
    <location>
        <begin position="227"/>
        <end position="247"/>
    </location>
</feature>
<feature type="topological domain" description="Cytoplasmic" evidence="1">
    <location>
        <begin position="248"/>
        <end position="267"/>
    </location>
</feature>
<feature type="transmembrane region" description="Helical; Name=6" evidence="1">
    <location>
        <begin position="268"/>
        <end position="288"/>
    </location>
</feature>
<feature type="topological domain" description="Extracellular" evidence="1">
    <location>
        <begin position="289"/>
        <end position="301"/>
    </location>
</feature>
<feature type="transmembrane region" description="Helical; Name=7" evidence="1">
    <location>
        <begin position="302"/>
        <end position="322"/>
    </location>
</feature>
<feature type="topological domain" description="Cytoplasmic" evidence="1">
    <location>
        <begin position="323"/>
        <end position="340"/>
    </location>
</feature>
<feature type="glycosylation site" description="N-linked (GlcNAc...) asparagine" evidence="1">
    <location>
        <position position="35"/>
    </location>
</feature>
<feature type="glycosylation site" description="N-linked (GlcNAc...) asparagine" evidence="1">
    <location>
        <position position="119"/>
    </location>
</feature>
<feature type="disulfide bond" evidence="2">
    <location>
        <begin position="127"/>
        <end position="219"/>
    </location>
</feature>
<feature type="sequence variant" id="VAR_047836" description="In dbSNP:rs17150243.">
    <original>W</original>
    <variation>G</variation>
    <location>
        <position position="84"/>
    </location>
</feature>
<dbReference type="EMBL" id="AB065837">
    <property type="protein sequence ID" value="BAC06056.1"/>
    <property type="molecule type" value="Genomic_DNA"/>
</dbReference>
<dbReference type="EMBL" id="AC022882">
    <property type="status" value="NOT_ANNOTATED_CDS"/>
    <property type="molecule type" value="Genomic_DNA"/>
</dbReference>
<dbReference type="EMBL" id="CH471076">
    <property type="protein sequence ID" value="EAW73705.1"/>
    <property type="molecule type" value="Genomic_DNA"/>
</dbReference>
<dbReference type="EMBL" id="BK004335">
    <property type="protein sequence ID" value="DAA04733.1"/>
    <property type="molecule type" value="Genomic_DNA"/>
</dbReference>
<dbReference type="RefSeq" id="NP_001004747.1">
    <property type="nucleotide sequence ID" value="NM_001004747.1"/>
</dbReference>
<dbReference type="SMR" id="Q8NGG3"/>
<dbReference type="FunCoup" id="Q8NGG3">
    <property type="interactions" value="416"/>
</dbReference>
<dbReference type="STRING" id="9606.ENSP00000305403"/>
<dbReference type="GlyCosmos" id="Q8NGG3">
    <property type="glycosylation" value="2 sites, No reported glycans"/>
</dbReference>
<dbReference type="GlyGen" id="Q8NGG3">
    <property type="glycosylation" value="2 sites"/>
</dbReference>
<dbReference type="iPTMnet" id="Q8NGG3"/>
<dbReference type="PhosphoSitePlus" id="Q8NGG3"/>
<dbReference type="BioMuta" id="OR5T3"/>
<dbReference type="DMDM" id="218512125"/>
<dbReference type="MassIVE" id="Q8NGG3"/>
<dbReference type="PaxDb" id="9606-ENSP00000305403"/>
<dbReference type="ProteomicsDB" id="73505"/>
<dbReference type="DNASU" id="390154"/>
<dbReference type="Ensembl" id="ENST00000575738.1">
    <property type="protein sequence ID" value="ENSP00000459586.1"/>
    <property type="gene ID" value="ENSG00000261897.1"/>
</dbReference>
<dbReference type="GeneID" id="390154"/>
<dbReference type="KEGG" id="hsa:390154"/>
<dbReference type="UCSC" id="uc010rjd.2">
    <property type="organism name" value="human"/>
</dbReference>
<dbReference type="AGR" id="HGNC:15297"/>
<dbReference type="CTD" id="390154"/>
<dbReference type="GeneCards" id="OR5T3"/>
<dbReference type="HGNC" id="HGNC:15297">
    <property type="gene designation" value="OR5T3"/>
</dbReference>
<dbReference type="neXtProt" id="NX_Q8NGG3"/>
<dbReference type="PharmGKB" id="PA32568"/>
<dbReference type="eggNOG" id="ENOG502SHA3">
    <property type="taxonomic scope" value="Eukaryota"/>
</dbReference>
<dbReference type="HOGENOM" id="CLU_012526_1_0_1"/>
<dbReference type="InParanoid" id="Q8NGG3"/>
<dbReference type="OrthoDB" id="9827639at2759"/>
<dbReference type="PAN-GO" id="Q8NGG3">
    <property type="GO annotations" value="6 GO annotations based on evolutionary models"/>
</dbReference>
<dbReference type="PhylomeDB" id="Q8NGG3"/>
<dbReference type="TreeFam" id="TF352753"/>
<dbReference type="PathwayCommons" id="Q8NGG3"/>
<dbReference type="Reactome" id="R-HSA-9752946">
    <property type="pathway name" value="Expression and translocation of olfactory receptors"/>
</dbReference>
<dbReference type="BioGRID-ORCS" id="390154">
    <property type="hits" value="9 hits in 701 CRISPR screens"/>
</dbReference>
<dbReference type="GeneWiki" id="OR5T3"/>
<dbReference type="GenomeRNAi" id="390154"/>
<dbReference type="Pharos" id="Q8NGG3">
    <property type="development level" value="Tdark"/>
</dbReference>
<dbReference type="PRO" id="PR:Q8NGG3"/>
<dbReference type="Proteomes" id="UP000005640">
    <property type="component" value="Unplaced"/>
</dbReference>
<dbReference type="RNAct" id="Q8NGG3">
    <property type="molecule type" value="protein"/>
</dbReference>
<dbReference type="GO" id="GO:0005886">
    <property type="term" value="C:plasma membrane"/>
    <property type="evidence" value="ECO:0007669"/>
    <property type="project" value="UniProtKB-SubCell"/>
</dbReference>
<dbReference type="GO" id="GO:0004930">
    <property type="term" value="F:G protein-coupled receptor activity"/>
    <property type="evidence" value="ECO:0007669"/>
    <property type="project" value="UniProtKB-KW"/>
</dbReference>
<dbReference type="GO" id="GO:0005549">
    <property type="term" value="F:odorant binding"/>
    <property type="evidence" value="ECO:0000318"/>
    <property type="project" value="GO_Central"/>
</dbReference>
<dbReference type="GO" id="GO:0004984">
    <property type="term" value="F:olfactory receptor activity"/>
    <property type="evidence" value="ECO:0000318"/>
    <property type="project" value="GO_Central"/>
</dbReference>
<dbReference type="GO" id="GO:0007186">
    <property type="term" value="P:G protein-coupled receptor signaling pathway"/>
    <property type="evidence" value="ECO:0000318"/>
    <property type="project" value="GO_Central"/>
</dbReference>
<dbReference type="GO" id="GO:0007608">
    <property type="term" value="P:sensory perception of smell"/>
    <property type="evidence" value="ECO:0000318"/>
    <property type="project" value="GO_Central"/>
</dbReference>
<dbReference type="FunFam" id="1.10.1220.70:FF:000001">
    <property type="entry name" value="Olfactory receptor"/>
    <property type="match status" value="1"/>
</dbReference>
<dbReference type="FunFam" id="1.20.1070.10:FF:000004">
    <property type="entry name" value="Olfactory receptor"/>
    <property type="match status" value="1"/>
</dbReference>
<dbReference type="Gene3D" id="1.20.1070.10">
    <property type="entry name" value="Rhodopsin 7-helix transmembrane proteins"/>
    <property type="match status" value="1"/>
</dbReference>
<dbReference type="InterPro" id="IPR000276">
    <property type="entry name" value="GPCR_Rhodpsn"/>
</dbReference>
<dbReference type="InterPro" id="IPR017452">
    <property type="entry name" value="GPCR_Rhodpsn_7TM"/>
</dbReference>
<dbReference type="InterPro" id="IPR000725">
    <property type="entry name" value="Olfact_rcpt"/>
</dbReference>
<dbReference type="PANTHER" id="PTHR48018">
    <property type="entry name" value="OLFACTORY RECEPTOR"/>
    <property type="match status" value="1"/>
</dbReference>
<dbReference type="Pfam" id="PF13853">
    <property type="entry name" value="7tm_4"/>
    <property type="match status" value="1"/>
</dbReference>
<dbReference type="PRINTS" id="PR00237">
    <property type="entry name" value="GPCRRHODOPSN"/>
</dbReference>
<dbReference type="PRINTS" id="PR00245">
    <property type="entry name" value="OLFACTORYR"/>
</dbReference>
<dbReference type="SUPFAM" id="SSF81321">
    <property type="entry name" value="Family A G protein-coupled receptor-like"/>
    <property type="match status" value="1"/>
</dbReference>
<dbReference type="PROSITE" id="PS50262">
    <property type="entry name" value="G_PROTEIN_RECEP_F1_2"/>
    <property type="match status" value="1"/>
</dbReference>
<organism>
    <name type="scientific">Homo sapiens</name>
    <name type="common">Human</name>
    <dbReference type="NCBI Taxonomy" id="9606"/>
    <lineage>
        <taxon>Eukaryota</taxon>
        <taxon>Metazoa</taxon>
        <taxon>Chordata</taxon>
        <taxon>Craniata</taxon>
        <taxon>Vertebrata</taxon>
        <taxon>Euteleostomi</taxon>
        <taxon>Mammalia</taxon>
        <taxon>Eutheria</taxon>
        <taxon>Euarchontoglires</taxon>
        <taxon>Primates</taxon>
        <taxon>Haplorrhini</taxon>
        <taxon>Catarrhini</taxon>
        <taxon>Hominidae</taxon>
        <taxon>Homo</taxon>
    </lineage>
</organism>
<name>OR5T3_HUMAN</name>